<reference key="1">
    <citation type="journal article" date="1997" name="Mol. Endocrinol.">
        <title>Molecular cloning of TA16, a transcriptional repressor that may mediate glucocorticoid-induced growth arrest of leiomyosarcoma cells.</title>
        <authorList>
            <person name="Fan W."/>
            <person name="Ma J.-X."/>
            <person name="Cheng L."/>
            <person name="Norris J.S."/>
        </authorList>
    </citation>
    <scope>NUCLEOTIDE SEQUENCE [MRNA]</scope>
    <source>
        <tissue>Leiomyosarcoma</tissue>
    </source>
</reference>
<feature type="chain" id="PRO_0000077039" description="NGFI-A-binding protein 1">
    <location>
        <begin position="1"/>
        <end position="485"/>
    </location>
</feature>
<feature type="region of interest" description="NCD1">
    <location>
        <begin position="4"/>
        <end position="82"/>
    </location>
</feature>
<feature type="region of interest" description="Disordered" evidence="4">
    <location>
        <begin position="160"/>
        <end position="187"/>
    </location>
</feature>
<feature type="region of interest" description="NCD2">
    <location>
        <begin position="220"/>
        <end position="309"/>
    </location>
</feature>
<feature type="region of interest" description="Necessary for nuclear localization" evidence="1">
    <location>
        <begin position="306"/>
        <end position="337"/>
    </location>
</feature>
<feature type="region of interest" description="Disordered" evidence="4">
    <location>
        <begin position="398"/>
        <end position="432"/>
    </location>
</feature>
<feature type="modified residue" description="Phosphoserine" evidence="3">
    <location>
        <position position="171"/>
    </location>
</feature>
<feature type="modified residue" description="Phosphoserine" evidence="3">
    <location>
        <position position="182"/>
    </location>
</feature>
<feature type="modified residue" description="Phosphoserine" evidence="2">
    <location>
        <position position="327"/>
    </location>
</feature>
<feature type="modified residue" description="Phosphoserine" evidence="3">
    <location>
        <position position="405"/>
    </location>
</feature>
<feature type="cross-link" description="Glycyl lysine isopeptide (Lys-Gly) (interchain with G-Cter in SUMO2)" evidence="2">
    <location>
        <position position="126"/>
    </location>
</feature>
<feature type="cross-link" description="Glycyl lysine isopeptide (Lys-Gly) (interchain with G-Cter in SUMO2)" evidence="2">
    <location>
        <position position="129"/>
    </location>
</feature>
<feature type="cross-link" description="Glycyl lysine isopeptide (Lys-Gly) (interchain with G-Cter in SUMO2)" evidence="2">
    <location>
        <position position="143"/>
    </location>
</feature>
<feature type="cross-link" description="Glycyl lysine isopeptide (Lys-Gly) (interchain with G-Cter in SUMO2)" evidence="2">
    <location>
        <position position="211"/>
    </location>
</feature>
<feature type="cross-link" description="Glycyl lysine isopeptide (Lys-Gly) (interchain with G-Cter in SUMO1); alternate" evidence="2">
    <location>
        <position position="332"/>
    </location>
</feature>
<feature type="cross-link" description="Glycyl lysine isopeptide (Lys-Gly) (interchain with G-Cter in SUMO2); alternate" evidence="2">
    <location>
        <position position="332"/>
    </location>
</feature>
<feature type="cross-link" description="Glycyl lysine isopeptide (Lys-Gly) (interchain with G-Cter in SUMO2)" evidence="2">
    <location>
        <position position="354"/>
    </location>
</feature>
<feature type="cross-link" description="Glycyl lysine isopeptide (Lys-Gly) (interchain with G-Cter in SUMO2)" evidence="2">
    <location>
        <position position="368"/>
    </location>
</feature>
<feature type="cross-link" description="Glycyl lysine isopeptide (Lys-Gly) (interchain with G-Cter in SUMO2)" evidence="2">
    <location>
        <position position="372"/>
    </location>
</feature>
<feature type="cross-link" description="Glycyl lysine isopeptide (Lys-Gly) (interchain with G-Cter in SUMO2)" evidence="2">
    <location>
        <position position="452"/>
    </location>
</feature>
<feature type="cross-link" description="Glycyl lysine isopeptide (Lys-Gly) (interchain with G-Cter in SUMO2)" evidence="2">
    <location>
        <position position="463"/>
    </location>
</feature>
<feature type="cross-link" description="Glycyl lysine isopeptide (Lys-Gly) (interchain with G-Cter in SUMO2)" evidence="2">
    <location>
        <position position="475"/>
    </location>
</feature>
<feature type="cross-link" description="Glycyl lysine isopeptide (Lys-Gly) (interchain with G-Cter in SUMO1); alternate" evidence="2">
    <location>
        <position position="478"/>
    </location>
</feature>
<feature type="cross-link" description="Glycyl lysine isopeptide (Lys-Gly) (interchain with G-Cter in SUMO2); alternate" evidence="2">
    <location>
        <position position="478"/>
    </location>
</feature>
<comment type="function">
    <text evidence="1">Acts as a transcriptional repressor for zinc finger transcription factors EGR1 and EGR2.</text>
</comment>
<comment type="subunit">
    <text evidence="1">Homomultimers may associate with EGR1 bound to DNA.</text>
</comment>
<comment type="subcellular location">
    <subcellularLocation>
        <location evidence="1">Nucleus</location>
    </subcellularLocation>
</comment>
<comment type="induction">
    <text>By glucocorticoids.</text>
</comment>
<comment type="domain">
    <text>The NAB conserved domain 1 (NCD1) interacts with EGR1 inhibitory domain and mediates multimerization.</text>
</comment>
<comment type="domain">
    <text>The NAB conserved domain 2 (NCD2) is necessary for transcriptional repression.</text>
</comment>
<comment type="similarity">
    <text evidence="5">Belongs to the NAB family.</text>
</comment>
<gene>
    <name type="primary">NAB1</name>
</gene>
<keyword id="KW-1017">Isopeptide bond</keyword>
<keyword id="KW-0539">Nucleus</keyword>
<keyword id="KW-0597">Phosphoprotein</keyword>
<keyword id="KW-1185">Reference proteome</keyword>
<keyword id="KW-0678">Repressor</keyword>
<keyword id="KW-0804">Transcription</keyword>
<keyword id="KW-0805">Transcription regulation</keyword>
<keyword id="KW-0832">Ubl conjugation</keyword>
<accession>O35589</accession>
<organism>
    <name type="scientific">Mesocricetus auratus</name>
    <name type="common">Golden hamster</name>
    <dbReference type="NCBI Taxonomy" id="10036"/>
    <lineage>
        <taxon>Eukaryota</taxon>
        <taxon>Metazoa</taxon>
        <taxon>Chordata</taxon>
        <taxon>Craniata</taxon>
        <taxon>Vertebrata</taxon>
        <taxon>Euteleostomi</taxon>
        <taxon>Mammalia</taxon>
        <taxon>Eutheria</taxon>
        <taxon>Euarchontoglires</taxon>
        <taxon>Glires</taxon>
        <taxon>Rodentia</taxon>
        <taxon>Myomorpha</taxon>
        <taxon>Muroidea</taxon>
        <taxon>Cricetidae</taxon>
        <taxon>Cricetinae</taxon>
        <taxon>Mesocricetus</taxon>
    </lineage>
</organism>
<evidence type="ECO:0000250" key="1"/>
<evidence type="ECO:0000250" key="2">
    <source>
        <dbReference type="UniProtKB" id="Q13506"/>
    </source>
</evidence>
<evidence type="ECO:0000250" key="3">
    <source>
        <dbReference type="UniProtKB" id="Q61122"/>
    </source>
</evidence>
<evidence type="ECO:0000256" key="4">
    <source>
        <dbReference type="SAM" id="MobiDB-lite"/>
    </source>
</evidence>
<evidence type="ECO:0000305" key="5"/>
<protein>
    <recommendedName>
        <fullName>NGFI-A-binding protein 1</fullName>
    </recommendedName>
    <alternativeName>
        <fullName>EGR-1-binding protein 1</fullName>
    </alternativeName>
    <alternativeName>
        <fullName>Transcriptional repressor TA16</fullName>
    </alternativeName>
</protein>
<dbReference type="EMBL" id="U88975">
    <property type="protein sequence ID" value="AAC53313.1"/>
    <property type="molecule type" value="mRNA"/>
</dbReference>
<dbReference type="RefSeq" id="NP_001268536.1">
    <property type="nucleotide sequence ID" value="NM_001281607.1"/>
</dbReference>
<dbReference type="SMR" id="O35589"/>
<dbReference type="STRING" id="10036.ENSMAUP00000023718"/>
<dbReference type="GeneID" id="101827193"/>
<dbReference type="KEGG" id="maua:101827193"/>
<dbReference type="CTD" id="4664"/>
<dbReference type="eggNOG" id="KOG3835">
    <property type="taxonomic scope" value="Eukaryota"/>
</dbReference>
<dbReference type="OrthoDB" id="10028556at2759"/>
<dbReference type="Proteomes" id="UP000189706">
    <property type="component" value="Unplaced"/>
</dbReference>
<dbReference type="GO" id="GO:0005634">
    <property type="term" value="C:nucleus"/>
    <property type="evidence" value="ECO:0007669"/>
    <property type="project" value="UniProtKB-SubCell"/>
</dbReference>
<dbReference type="GO" id="GO:0003712">
    <property type="term" value="F:transcription coregulator activity"/>
    <property type="evidence" value="ECO:0007669"/>
    <property type="project" value="InterPro"/>
</dbReference>
<dbReference type="GO" id="GO:0045892">
    <property type="term" value="P:negative regulation of DNA-templated transcription"/>
    <property type="evidence" value="ECO:0007669"/>
    <property type="project" value="InterPro"/>
</dbReference>
<dbReference type="FunFam" id="1.20.120.2010:FF:000001">
    <property type="entry name" value="NGFI-A-binding protein 1 isoform X1"/>
    <property type="match status" value="1"/>
</dbReference>
<dbReference type="Gene3D" id="1.20.120.2010">
    <property type="entry name" value="NAB conserved domain 2"/>
    <property type="match status" value="1"/>
</dbReference>
<dbReference type="InterPro" id="IPR006986">
    <property type="entry name" value="Nab1_C"/>
</dbReference>
<dbReference type="InterPro" id="IPR006989">
    <property type="entry name" value="NAB_co-repressor_dom"/>
</dbReference>
<dbReference type="InterPro" id="IPR039040">
    <property type="entry name" value="NAB_fam"/>
</dbReference>
<dbReference type="InterPro" id="IPR006988">
    <property type="entry name" value="Nab_N"/>
</dbReference>
<dbReference type="InterPro" id="IPR038398">
    <property type="entry name" value="NCD2_sf"/>
</dbReference>
<dbReference type="PANTHER" id="PTHR12623">
    <property type="entry name" value="NGFI-A BINDING PROTEIN"/>
    <property type="match status" value="1"/>
</dbReference>
<dbReference type="PANTHER" id="PTHR12623:SF9">
    <property type="entry name" value="NGFI-A-BINDING PROTEIN 1"/>
    <property type="match status" value="1"/>
</dbReference>
<dbReference type="Pfam" id="PF04902">
    <property type="entry name" value="Nab1"/>
    <property type="match status" value="1"/>
</dbReference>
<dbReference type="Pfam" id="PF04905">
    <property type="entry name" value="NCD2"/>
    <property type="match status" value="1"/>
</dbReference>
<dbReference type="Pfam" id="PF04904">
    <property type="entry name" value="SAM_NCD1"/>
    <property type="match status" value="1"/>
</dbReference>
<proteinExistence type="evidence at transcript level"/>
<name>NAB1_MESAU</name>
<sequence length="485" mass="54062">MATALPRTLGELQLYRILQKANLLSYFGAFIQQGGDDVQQLCEAGEEEFLEIMALVGMASKPLHVRRLQKALRDWVTNPGLFNQPLTSLPVSSIPIYKLPKGSPTWLGISCNSYERNSSAREPHLKIPKCAATTCVQSLGQGKSEVGSLAVQSVSESRLWQGHHATESEHSLSPADVGSPASPKESSEALDAAAALSVAECVERMASTLPKSDLNEVKELLKNNKKLAKMIGHIFEMSDEDPHKEEEIRKYSAIYGRFDSKRKDGKHLTLHELTVNEAAAQLCVKDNALLTRRDELFALARQVSREVTYKYTYRTTRLKCGERDELSPKRIKVEDGFPDFQEPVQTLFQQARAKSEELAALSSQQTEKGMAKQMELLCAQASYERLQQERRLTAGLYRQSSGEHSPDGLPSDGSDGQGERPLNLRMPNVQNRQPHHFVADGELSRLYSSEAKSHSSENLGILKDYPHSAFTLEKKVIKTEPEDSR</sequence>